<reference key="1">
    <citation type="submission" date="2006-12" db="EMBL/GenBank/DDBJ databases">
        <title>Complete sequence of chromosome 1 of Acidovorax sp. JS42.</title>
        <authorList>
            <person name="Copeland A."/>
            <person name="Lucas S."/>
            <person name="Lapidus A."/>
            <person name="Barry K."/>
            <person name="Detter J.C."/>
            <person name="Glavina del Rio T."/>
            <person name="Dalin E."/>
            <person name="Tice H."/>
            <person name="Pitluck S."/>
            <person name="Chertkov O."/>
            <person name="Brettin T."/>
            <person name="Bruce D."/>
            <person name="Han C."/>
            <person name="Tapia R."/>
            <person name="Gilna P."/>
            <person name="Schmutz J."/>
            <person name="Larimer F."/>
            <person name="Land M."/>
            <person name="Hauser L."/>
            <person name="Kyrpides N."/>
            <person name="Kim E."/>
            <person name="Stahl D."/>
            <person name="Richardson P."/>
        </authorList>
    </citation>
    <scope>NUCLEOTIDE SEQUENCE [LARGE SCALE GENOMIC DNA]</scope>
    <source>
        <strain>JS42</strain>
    </source>
</reference>
<comment type="function">
    <text evidence="1">Catalyzes the reduction of the glycolytic intermediate dihydroxyacetone phosphate (DHAP) to sn-glycerol 3-phosphate (G3P), the key precursor for phospholipid synthesis.</text>
</comment>
<comment type="catalytic activity">
    <reaction evidence="1">
        <text>sn-glycerol 3-phosphate + NAD(+) = dihydroxyacetone phosphate + NADH + H(+)</text>
        <dbReference type="Rhea" id="RHEA:11092"/>
        <dbReference type="ChEBI" id="CHEBI:15378"/>
        <dbReference type="ChEBI" id="CHEBI:57540"/>
        <dbReference type="ChEBI" id="CHEBI:57597"/>
        <dbReference type="ChEBI" id="CHEBI:57642"/>
        <dbReference type="ChEBI" id="CHEBI:57945"/>
        <dbReference type="EC" id="1.1.1.94"/>
    </reaction>
    <physiologicalReaction direction="right-to-left" evidence="1">
        <dbReference type="Rhea" id="RHEA:11094"/>
    </physiologicalReaction>
</comment>
<comment type="catalytic activity">
    <reaction evidence="1">
        <text>sn-glycerol 3-phosphate + NADP(+) = dihydroxyacetone phosphate + NADPH + H(+)</text>
        <dbReference type="Rhea" id="RHEA:11096"/>
        <dbReference type="ChEBI" id="CHEBI:15378"/>
        <dbReference type="ChEBI" id="CHEBI:57597"/>
        <dbReference type="ChEBI" id="CHEBI:57642"/>
        <dbReference type="ChEBI" id="CHEBI:57783"/>
        <dbReference type="ChEBI" id="CHEBI:58349"/>
        <dbReference type="EC" id="1.1.1.94"/>
    </reaction>
    <physiologicalReaction direction="right-to-left" evidence="1">
        <dbReference type="Rhea" id="RHEA:11098"/>
    </physiologicalReaction>
</comment>
<comment type="pathway">
    <text evidence="1">Membrane lipid metabolism; glycerophospholipid metabolism.</text>
</comment>
<comment type="subcellular location">
    <subcellularLocation>
        <location evidence="1">Cytoplasm</location>
    </subcellularLocation>
</comment>
<comment type="similarity">
    <text evidence="1">Belongs to the NAD-dependent glycerol-3-phosphate dehydrogenase family.</text>
</comment>
<feature type="chain" id="PRO_1000049477" description="Glycerol-3-phosphate dehydrogenase [NAD(P)+]">
    <location>
        <begin position="1"/>
        <end position="330"/>
    </location>
</feature>
<feature type="active site" description="Proton acceptor" evidence="1">
    <location>
        <position position="188"/>
    </location>
</feature>
<feature type="binding site" evidence="1">
    <location>
        <position position="11"/>
    </location>
    <ligand>
        <name>NADPH</name>
        <dbReference type="ChEBI" id="CHEBI:57783"/>
    </ligand>
</feature>
<feature type="binding site" evidence="1">
    <location>
        <position position="33"/>
    </location>
    <ligand>
        <name>NADPH</name>
        <dbReference type="ChEBI" id="CHEBI:57783"/>
    </ligand>
</feature>
<feature type="binding site" evidence="1">
    <location>
        <position position="105"/>
    </location>
    <ligand>
        <name>NADPH</name>
        <dbReference type="ChEBI" id="CHEBI:57783"/>
    </ligand>
</feature>
<feature type="binding site" evidence="1">
    <location>
        <position position="105"/>
    </location>
    <ligand>
        <name>sn-glycerol 3-phosphate</name>
        <dbReference type="ChEBI" id="CHEBI:57597"/>
    </ligand>
</feature>
<feature type="binding site" evidence="1">
    <location>
        <position position="133"/>
    </location>
    <ligand>
        <name>sn-glycerol 3-phosphate</name>
        <dbReference type="ChEBI" id="CHEBI:57597"/>
    </ligand>
</feature>
<feature type="binding site" evidence="1">
    <location>
        <position position="135"/>
    </location>
    <ligand>
        <name>sn-glycerol 3-phosphate</name>
        <dbReference type="ChEBI" id="CHEBI:57597"/>
    </ligand>
</feature>
<feature type="binding site" evidence="1">
    <location>
        <position position="137"/>
    </location>
    <ligand>
        <name>NADPH</name>
        <dbReference type="ChEBI" id="CHEBI:57783"/>
    </ligand>
</feature>
<feature type="binding site" evidence="1">
    <location>
        <position position="188"/>
    </location>
    <ligand>
        <name>sn-glycerol 3-phosphate</name>
        <dbReference type="ChEBI" id="CHEBI:57597"/>
    </ligand>
</feature>
<feature type="binding site" evidence="1">
    <location>
        <position position="241"/>
    </location>
    <ligand>
        <name>sn-glycerol 3-phosphate</name>
        <dbReference type="ChEBI" id="CHEBI:57597"/>
    </ligand>
</feature>
<feature type="binding site" evidence="1">
    <location>
        <position position="251"/>
    </location>
    <ligand>
        <name>sn-glycerol 3-phosphate</name>
        <dbReference type="ChEBI" id="CHEBI:57597"/>
    </ligand>
</feature>
<feature type="binding site" evidence="1">
    <location>
        <position position="252"/>
    </location>
    <ligand>
        <name>NADPH</name>
        <dbReference type="ChEBI" id="CHEBI:57783"/>
    </ligand>
</feature>
<feature type="binding site" evidence="1">
    <location>
        <position position="252"/>
    </location>
    <ligand>
        <name>sn-glycerol 3-phosphate</name>
        <dbReference type="ChEBI" id="CHEBI:57597"/>
    </ligand>
</feature>
<feature type="binding site" evidence="1">
    <location>
        <position position="253"/>
    </location>
    <ligand>
        <name>sn-glycerol 3-phosphate</name>
        <dbReference type="ChEBI" id="CHEBI:57597"/>
    </ligand>
</feature>
<feature type="binding site" evidence="1">
    <location>
        <position position="276"/>
    </location>
    <ligand>
        <name>NADPH</name>
        <dbReference type="ChEBI" id="CHEBI:57783"/>
    </ligand>
</feature>
<feature type="binding site" evidence="1">
    <location>
        <position position="278"/>
    </location>
    <ligand>
        <name>NADPH</name>
        <dbReference type="ChEBI" id="CHEBI:57783"/>
    </ligand>
</feature>
<gene>
    <name evidence="1" type="primary">gpsA</name>
    <name type="ordered locus">Ajs_3501</name>
</gene>
<organism>
    <name type="scientific">Acidovorax sp. (strain JS42)</name>
    <dbReference type="NCBI Taxonomy" id="232721"/>
    <lineage>
        <taxon>Bacteria</taxon>
        <taxon>Pseudomonadati</taxon>
        <taxon>Pseudomonadota</taxon>
        <taxon>Betaproteobacteria</taxon>
        <taxon>Burkholderiales</taxon>
        <taxon>Comamonadaceae</taxon>
        <taxon>Acidovorax</taxon>
    </lineage>
</organism>
<keyword id="KW-0963">Cytoplasm</keyword>
<keyword id="KW-0444">Lipid biosynthesis</keyword>
<keyword id="KW-0443">Lipid metabolism</keyword>
<keyword id="KW-0520">NAD</keyword>
<keyword id="KW-0521">NADP</keyword>
<keyword id="KW-0547">Nucleotide-binding</keyword>
<keyword id="KW-0560">Oxidoreductase</keyword>
<keyword id="KW-0594">Phospholipid biosynthesis</keyword>
<keyword id="KW-1208">Phospholipid metabolism</keyword>
<evidence type="ECO:0000255" key="1">
    <source>
        <dbReference type="HAMAP-Rule" id="MF_00394"/>
    </source>
</evidence>
<proteinExistence type="inferred from homology"/>
<protein>
    <recommendedName>
        <fullName evidence="1">Glycerol-3-phosphate dehydrogenase [NAD(P)+]</fullName>
        <ecNumber evidence="1">1.1.1.94</ecNumber>
    </recommendedName>
    <alternativeName>
        <fullName evidence="1">NAD(P)(+)-dependent glycerol-3-phosphate dehydrogenase</fullName>
    </alternativeName>
    <alternativeName>
        <fullName evidence="1">NAD(P)H-dependent dihydroxyacetone-phosphate reductase</fullName>
    </alternativeName>
</protein>
<name>GPDA_ACISJ</name>
<accession>A1WBI9</accession>
<dbReference type="EC" id="1.1.1.94" evidence="1"/>
<dbReference type="EMBL" id="CP000539">
    <property type="protein sequence ID" value="ABM43614.1"/>
    <property type="molecule type" value="Genomic_DNA"/>
</dbReference>
<dbReference type="SMR" id="A1WBI9"/>
<dbReference type="STRING" id="232721.Ajs_3501"/>
<dbReference type="KEGG" id="ajs:Ajs_3501"/>
<dbReference type="eggNOG" id="COG0240">
    <property type="taxonomic scope" value="Bacteria"/>
</dbReference>
<dbReference type="HOGENOM" id="CLU_033449_0_2_4"/>
<dbReference type="UniPathway" id="UPA00940"/>
<dbReference type="Proteomes" id="UP000000645">
    <property type="component" value="Chromosome"/>
</dbReference>
<dbReference type="GO" id="GO:0005829">
    <property type="term" value="C:cytosol"/>
    <property type="evidence" value="ECO:0007669"/>
    <property type="project" value="TreeGrafter"/>
</dbReference>
<dbReference type="GO" id="GO:0047952">
    <property type="term" value="F:glycerol-3-phosphate dehydrogenase [NAD(P)+] activity"/>
    <property type="evidence" value="ECO:0007669"/>
    <property type="project" value="UniProtKB-UniRule"/>
</dbReference>
<dbReference type="GO" id="GO:0051287">
    <property type="term" value="F:NAD binding"/>
    <property type="evidence" value="ECO:0007669"/>
    <property type="project" value="InterPro"/>
</dbReference>
<dbReference type="GO" id="GO:0005975">
    <property type="term" value="P:carbohydrate metabolic process"/>
    <property type="evidence" value="ECO:0007669"/>
    <property type="project" value="InterPro"/>
</dbReference>
<dbReference type="GO" id="GO:0046167">
    <property type="term" value="P:glycerol-3-phosphate biosynthetic process"/>
    <property type="evidence" value="ECO:0007669"/>
    <property type="project" value="UniProtKB-UniRule"/>
</dbReference>
<dbReference type="GO" id="GO:0046168">
    <property type="term" value="P:glycerol-3-phosphate catabolic process"/>
    <property type="evidence" value="ECO:0007669"/>
    <property type="project" value="InterPro"/>
</dbReference>
<dbReference type="GO" id="GO:0006650">
    <property type="term" value="P:glycerophospholipid metabolic process"/>
    <property type="evidence" value="ECO:0007669"/>
    <property type="project" value="UniProtKB-UniRule"/>
</dbReference>
<dbReference type="GO" id="GO:0008654">
    <property type="term" value="P:phospholipid biosynthetic process"/>
    <property type="evidence" value="ECO:0007669"/>
    <property type="project" value="UniProtKB-KW"/>
</dbReference>
<dbReference type="FunFam" id="1.10.1040.10:FF:000001">
    <property type="entry name" value="Glycerol-3-phosphate dehydrogenase [NAD(P)+]"/>
    <property type="match status" value="1"/>
</dbReference>
<dbReference type="FunFam" id="3.40.50.720:FF:000019">
    <property type="entry name" value="Glycerol-3-phosphate dehydrogenase [NAD(P)+]"/>
    <property type="match status" value="1"/>
</dbReference>
<dbReference type="Gene3D" id="1.10.1040.10">
    <property type="entry name" value="N-(1-d-carboxylethyl)-l-norvaline Dehydrogenase, domain 2"/>
    <property type="match status" value="1"/>
</dbReference>
<dbReference type="Gene3D" id="3.40.50.720">
    <property type="entry name" value="NAD(P)-binding Rossmann-like Domain"/>
    <property type="match status" value="1"/>
</dbReference>
<dbReference type="HAMAP" id="MF_00394">
    <property type="entry name" value="NAD_Glyc3P_dehydrog"/>
    <property type="match status" value="1"/>
</dbReference>
<dbReference type="InterPro" id="IPR008927">
    <property type="entry name" value="6-PGluconate_DH-like_C_sf"/>
</dbReference>
<dbReference type="InterPro" id="IPR013328">
    <property type="entry name" value="6PGD_dom2"/>
</dbReference>
<dbReference type="InterPro" id="IPR006168">
    <property type="entry name" value="G3P_DH_NAD-dep"/>
</dbReference>
<dbReference type="InterPro" id="IPR006109">
    <property type="entry name" value="G3P_DH_NAD-dep_C"/>
</dbReference>
<dbReference type="InterPro" id="IPR011128">
    <property type="entry name" value="G3P_DH_NAD-dep_N"/>
</dbReference>
<dbReference type="InterPro" id="IPR036291">
    <property type="entry name" value="NAD(P)-bd_dom_sf"/>
</dbReference>
<dbReference type="NCBIfam" id="NF000940">
    <property type="entry name" value="PRK00094.1-2"/>
    <property type="match status" value="1"/>
</dbReference>
<dbReference type="NCBIfam" id="NF000942">
    <property type="entry name" value="PRK00094.1-4"/>
    <property type="match status" value="1"/>
</dbReference>
<dbReference type="PANTHER" id="PTHR11728">
    <property type="entry name" value="GLYCEROL-3-PHOSPHATE DEHYDROGENASE"/>
    <property type="match status" value="1"/>
</dbReference>
<dbReference type="PANTHER" id="PTHR11728:SF1">
    <property type="entry name" value="GLYCEROL-3-PHOSPHATE DEHYDROGENASE [NAD(+)] 2, CHLOROPLASTIC"/>
    <property type="match status" value="1"/>
</dbReference>
<dbReference type="Pfam" id="PF07479">
    <property type="entry name" value="NAD_Gly3P_dh_C"/>
    <property type="match status" value="1"/>
</dbReference>
<dbReference type="Pfam" id="PF01210">
    <property type="entry name" value="NAD_Gly3P_dh_N"/>
    <property type="match status" value="1"/>
</dbReference>
<dbReference type="PIRSF" id="PIRSF000114">
    <property type="entry name" value="Glycerol-3-P_dh"/>
    <property type="match status" value="1"/>
</dbReference>
<dbReference type="PRINTS" id="PR00077">
    <property type="entry name" value="GPDHDRGNASE"/>
</dbReference>
<dbReference type="SUPFAM" id="SSF48179">
    <property type="entry name" value="6-phosphogluconate dehydrogenase C-terminal domain-like"/>
    <property type="match status" value="1"/>
</dbReference>
<dbReference type="SUPFAM" id="SSF51735">
    <property type="entry name" value="NAD(P)-binding Rossmann-fold domains"/>
    <property type="match status" value="1"/>
</dbReference>
<dbReference type="PROSITE" id="PS00957">
    <property type="entry name" value="NAD_G3PDH"/>
    <property type="match status" value="1"/>
</dbReference>
<sequence length="330" mass="34208">MKIVVLGAGAWGTALAMSAAAHAACHEVTLWARDAQQAQAMQAKRQNQRYLPGLAFPPGLHVASGDMGALAADADLVVVGTPMAALRGMLERLDGCAAPIAWLCKGFEADTGLMAHEVCAQVAPRLHSGVFSGPSFAQEVATAQPTAMVAASPRATVRDALVQAFHGPALRVYASEDIVGVEVGGAVKNVLAIATGLCDGLQLGMNARAALITRGLAEMTRLGLALGARPETFMGLSGLGDLVLTATGDLSRNRRVGLLLAEGRTLAQAVESLGHVAEGVYSARTVVQRARAVGVEMPIAECVVALLDGELRAAEAVARLMEREPTVERH</sequence>